<reference key="1">
    <citation type="submission" date="2003-02" db="EMBL/GenBank/DDBJ databases">
        <title>Complete nucleotide sequence of Pinus koraiensis.</title>
        <authorList>
            <person name="Noh E.W."/>
            <person name="Lee J.S."/>
            <person name="Choi Y.I."/>
            <person name="Han M.S."/>
            <person name="Yi Y.S."/>
            <person name="Han S.U."/>
        </authorList>
    </citation>
    <scope>NUCLEOTIDE SEQUENCE [LARGE SCALE GENOMIC DNA]</scope>
    <source>
        <strain>KangWon16</strain>
    </source>
</reference>
<geneLocation type="chloroplast"/>
<evidence type="ECO:0000255" key="1">
    <source>
        <dbReference type="HAMAP-Rule" id="MF_01379"/>
    </source>
</evidence>
<gene>
    <name evidence="1" type="primary">psbA</name>
</gene>
<protein>
    <recommendedName>
        <fullName evidence="1">Photosystem II protein D1</fullName>
        <shortName evidence="1">PSII D1 protein</shortName>
        <ecNumber evidence="1">1.10.3.9</ecNumber>
    </recommendedName>
    <alternativeName>
        <fullName evidence="1">Photosystem II Q(B) protein</fullName>
    </alternativeName>
</protein>
<dbReference type="EC" id="1.10.3.9" evidence="1"/>
<dbReference type="EMBL" id="AY228468">
    <property type="protein sequence ID" value="AAO74146.1"/>
    <property type="molecule type" value="Genomic_DNA"/>
</dbReference>
<dbReference type="RefSeq" id="NP_817132.1">
    <property type="nucleotide sequence ID" value="NC_004677.2"/>
</dbReference>
<dbReference type="SMR" id="Q85WS3"/>
<dbReference type="GeneID" id="1450769"/>
<dbReference type="GO" id="GO:0009535">
    <property type="term" value="C:chloroplast thylakoid membrane"/>
    <property type="evidence" value="ECO:0007669"/>
    <property type="project" value="UniProtKB-SubCell"/>
</dbReference>
<dbReference type="GO" id="GO:0009523">
    <property type="term" value="C:photosystem II"/>
    <property type="evidence" value="ECO:0007669"/>
    <property type="project" value="UniProtKB-KW"/>
</dbReference>
<dbReference type="GO" id="GO:0016168">
    <property type="term" value="F:chlorophyll binding"/>
    <property type="evidence" value="ECO:0007669"/>
    <property type="project" value="UniProtKB-UniRule"/>
</dbReference>
<dbReference type="GO" id="GO:0045156">
    <property type="term" value="F:electron transporter, transferring electrons within the cyclic electron transport pathway of photosynthesis activity"/>
    <property type="evidence" value="ECO:0007669"/>
    <property type="project" value="InterPro"/>
</dbReference>
<dbReference type="GO" id="GO:0005506">
    <property type="term" value="F:iron ion binding"/>
    <property type="evidence" value="ECO:0007669"/>
    <property type="project" value="UniProtKB-UniRule"/>
</dbReference>
<dbReference type="GO" id="GO:0016682">
    <property type="term" value="F:oxidoreductase activity, acting on diphenols and related substances as donors, oxygen as acceptor"/>
    <property type="evidence" value="ECO:0007669"/>
    <property type="project" value="UniProtKB-UniRule"/>
</dbReference>
<dbReference type="GO" id="GO:0010242">
    <property type="term" value="F:oxygen evolving activity"/>
    <property type="evidence" value="ECO:0007669"/>
    <property type="project" value="UniProtKB-EC"/>
</dbReference>
<dbReference type="GO" id="GO:0009772">
    <property type="term" value="P:photosynthetic electron transport in photosystem II"/>
    <property type="evidence" value="ECO:0007669"/>
    <property type="project" value="InterPro"/>
</dbReference>
<dbReference type="GO" id="GO:0009635">
    <property type="term" value="P:response to herbicide"/>
    <property type="evidence" value="ECO:0007669"/>
    <property type="project" value="UniProtKB-KW"/>
</dbReference>
<dbReference type="CDD" id="cd09289">
    <property type="entry name" value="Photosystem-II_D1"/>
    <property type="match status" value="1"/>
</dbReference>
<dbReference type="FunFam" id="1.20.85.10:FF:000002">
    <property type="entry name" value="Photosystem II protein D1"/>
    <property type="match status" value="1"/>
</dbReference>
<dbReference type="Gene3D" id="1.20.85.10">
    <property type="entry name" value="Photosystem II protein D1-like"/>
    <property type="match status" value="1"/>
</dbReference>
<dbReference type="HAMAP" id="MF_01379">
    <property type="entry name" value="PSII_PsbA_D1"/>
    <property type="match status" value="1"/>
</dbReference>
<dbReference type="InterPro" id="IPR055266">
    <property type="entry name" value="D1/D2"/>
</dbReference>
<dbReference type="InterPro" id="IPR036854">
    <property type="entry name" value="Photo_II_D1/D2_sf"/>
</dbReference>
<dbReference type="InterPro" id="IPR000484">
    <property type="entry name" value="Photo_RC_L/M"/>
</dbReference>
<dbReference type="InterPro" id="IPR055265">
    <property type="entry name" value="Photo_RC_L/M_CS"/>
</dbReference>
<dbReference type="InterPro" id="IPR005867">
    <property type="entry name" value="PSII_D1"/>
</dbReference>
<dbReference type="NCBIfam" id="TIGR01151">
    <property type="entry name" value="psbA"/>
    <property type="match status" value="1"/>
</dbReference>
<dbReference type="PANTHER" id="PTHR33149:SF12">
    <property type="entry name" value="PHOTOSYSTEM II D2 PROTEIN"/>
    <property type="match status" value="1"/>
</dbReference>
<dbReference type="PANTHER" id="PTHR33149">
    <property type="entry name" value="PHOTOSYSTEM II PROTEIN D1"/>
    <property type="match status" value="1"/>
</dbReference>
<dbReference type="Pfam" id="PF00124">
    <property type="entry name" value="Photo_RC"/>
    <property type="match status" value="1"/>
</dbReference>
<dbReference type="PRINTS" id="PR00256">
    <property type="entry name" value="REACTNCENTRE"/>
</dbReference>
<dbReference type="SUPFAM" id="SSF81483">
    <property type="entry name" value="Bacterial photosystem II reaction centre, L and M subunits"/>
    <property type="match status" value="1"/>
</dbReference>
<dbReference type="PROSITE" id="PS00244">
    <property type="entry name" value="REACTION_CENTER"/>
    <property type="match status" value="1"/>
</dbReference>
<organism>
    <name type="scientific">Pinus koraiensis</name>
    <name type="common">Korean pine</name>
    <dbReference type="NCBI Taxonomy" id="88728"/>
    <lineage>
        <taxon>Eukaryota</taxon>
        <taxon>Viridiplantae</taxon>
        <taxon>Streptophyta</taxon>
        <taxon>Embryophyta</taxon>
        <taxon>Tracheophyta</taxon>
        <taxon>Spermatophyta</taxon>
        <taxon>Pinopsida</taxon>
        <taxon>Pinidae</taxon>
        <taxon>Conifers I</taxon>
        <taxon>Pinales</taxon>
        <taxon>Pinaceae</taxon>
        <taxon>Pinus</taxon>
        <taxon>Pinus subgen. Strobus</taxon>
    </lineage>
</organism>
<feature type="initiator methionine" description="Removed" evidence="1">
    <location>
        <position position="1"/>
    </location>
</feature>
<feature type="chain" id="PRO_0000277435" description="Photosystem II protein D1" evidence="1">
    <location>
        <begin position="2"/>
        <end position="344"/>
    </location>
</feature>
<feature type="propeptide" id="PRO_0000316476" evidence="1">
    <location>
        <begin position="345"/>
        <end position="353"/>
    </location>
</feature>
<feature type="transmembrane region" description="Helical" evidence="1">
    <location>
        <begin position="29"/>
        <end position="46"/>
    </location>
</feature>
<feature type="transmembrane region" description="Helical" evidence="1">
    <location>
        <begin position="118"/>
        <end position="133"/>
    </location>
</feature>
<feature type="transmembrane region" description="Helical" evidence="1">
    <location>
        <begin position="142"/>
        <end position="156"/>
    </location>
</feature>
<feature type="transmembrane region" description="Helical" evidence="1">
    <location>
        <begin position="197"/>
        <end position="218"/>
    </location>
</feature>
<feature type="transmembrane region" description="Helical" evidence="1">
    <location>
        <begin position="274"/>
        <end position="288"/>
    </location>
</feature>
<feature type="binding site" description="axial binding residue" evidence="1">
    <location>
        <position position="118"/>
    </location>
    <ligand>
        <name>chlorophyll a</name>
        <dbReference type="ChEBI" id="CHEBI:58416"/>
        <label>ChlzD1</label>
    </ligand>
    <ligandPart>
        <name>Mg</name>
        <dbReference type="ChEBI" id="CHEBI:25107"/>
    </ligandPart>
</feature>
<feature type="binding site" evidence="1">
    <location>
        <position position="126"/>
    </location>
    <ligand>
        <name>pheophytin a</name>
        <dbReference type="ChEBI" id="CHEBI:136840"/>
        <label>D1</label>
    </ligand>
</feature>
<feature type="binding site" evidence="1">
    <location>
        <position position="170"/>
    </location>
    <ligand>
        <name>[CaMn4O5] cluster</name>
        <dbReference type="ChEBI" id="CHEBI:189552"/>
    </ligand>
</feature>
<feature type="binding site" evidence="1">
    <location>
        <position position="189"/>
    </location>
    <ligand>
        <name>[CaMn4O5] cluster</name>
        <dbReference type="ChEBI" id="CHEBI:189552"/>
    </ligand>
</feature>
<feature type="binding site" description="axial binding residue" evidence="1">
    <location>
        <position position="198"/>
    </location>
    <ligand>
        <name>chlorophyll a</name>
        <dbReference type="ChEBI" id="CHEBI:58416"/>
        <label>PD1</label>
    </ligand>
    <ligandPart>
        <name>Mg</name>
        <dbReference type="ChEBI" id="CHEBI:25107"/>
    </ligandPart>
</feature>
<feature type="binding site" evidence="1">
    <location>
        <position position="215"/>
    </location>
    <ligand>
        <name>a quinone</name>
        <dbReference type="ChEBI" id="CHEBI:132124"/>
        <label>B</label>
    </ligand>
</feature>
<feature type="binding site" evidence="1">
    <location>
        <position position="215"/>
    </location>
    <ligand>
        <name>Fe cation</name>
        <dbReference type="ChEBI" id="CHEBI:24875"/>
        <note>ligand shared with heterodimeric partner</note>
    </ligand>
</feature>
<feature type="binding site" evidence="1">
    <location>
        <begin position="264"/>
        <end position="265"/>
    </location>
    <ligand>
        <name>a quinone</name>
        <dbReference type="ChEBI" id="CHEBI:132124"/>
        <label>B</label>
    </ligand>
</feature>
<feature type="binding site" evidence="1">
    <location>
        <position position="272"/>
    </location>
    <ligand>
        <name>Fe cation</name>
        <dbReference type="ChEBI" id="CHEBI:24875"/>
        <note>ligand shared with heterodimeric partner</note>
    </ligand>
</feature>
<feature type="binding site" evidence="1">
    <location>
        <position position="332"/>
    </location>
    <ligand>
        <name>[CaMn4O5] cluster</name>
        <dbReference type="ChEBI" id="CHEBI:189552"/>
    </ligand>
</feature>
<feature type="binding site" evidence="1">
    <location>
        <position position="333"/>
    </location>
    <ligand>
        <name>[CaMn4O5] cluster</name>
        <dbReference type="ChEBI" id="CHEBI:189552"/>
    </ligand>
</feature>
<feature type="binding site" evidence="1">
    <location>
        <position position="342"/>
    </location>
    <ligand>
        <name>[CaMn4O5] cluster</name>
        <dbReference type="ChEBI" id="CHEBI:189552"/>
    </ligand>
</feature>
<feature type="binding site" evidence="1">
    <location>
        <position position="344"/>
    </location>
    <ligand>
        <name>[CaMn4O5] cluster</name>
        <dbReference type="ChEBI" id="CHEBI:189552"/>
    </ligand>
</feature>
<feature type="site" description="Tyrosine radical intermediate" evidence="1">
    <location>
        <position position="161"/>
    </location>
</feature>
<feature type="site" description="Stabilizes free radical intermediate" evidence="1">
    <location>
        <position position="190"/>
    </location>
</feature>
<feature type="site" description="Cleavage; by CTPA" evidence="1">
    <location>
        <begin position="344"/>
        <end position="345"/>
    </location>
</feature>
<feature type="modified residue" description="N-acetylthreonine" evidence="1">
    <location>
        <position position="2"/>
    </location>
</feature>
<feature type="modified residue" description="Phosphothreonine" evidence="1">
    <location>
        <position position="2"/>
    </location>
</feature>
<proteinExistence type="inferred from homology"/>
<name>PSBA_PINKO</name>
<comment type="function">
    <text evidence="1">Photosystem II (PSII) is a light-driven water:plastoquinone oxidoreductase that uses light energy to abstract electrons from H(2)O, generating O(2) and a proton gradient subsequently used for ATP formation. It consists of a core antenna complex that captures photons, and an electron transfer chain that converts photonic excitation into a charge separation. The D1/D2 (PsbA/PsbD) reaction center heterodimer binds P680, the primary electron donor of PSII as well as several subsequent electron acceptors.</text>
</comment>
<comment type="catalytic activity">
    <reaction evidence="1">
        <text>2 a plastoquinone + 4 hnu + 2 H2O = 2 a plastoquinol + O2</text>
        <dbReference type="Rhea" id="RHEA:36359"/>
        <dbReference type="Rhea" id="RHEA-COMP:9561"/>
        <dbReference type="Rhea" id="RHEA-COMP:9562"/>
        <dbReference type="ChEBI" id="CHEBI:15377"/>
        <dbReference type="ChEBI" id="CHEBI:15379"/>
        <dbReference type="ChEBI" id="CHEBI:17757"/>
        <dbReference type="ChEBI" id="CHEBI:30212"/>
        <dbReference type="ChEBI" id="CHEBI:62192"/>
        <dbReference type="EC" id="1.10.3.9"/>
    </reaction>
</comment>
<comment type="cofactor">
    <text evidence="1">The D1/D2 heterodimer binds P680, chlorophylls that are the primary electron donor of PSII, and subsequent electron acceptors. It shares a non-heme iron and each subunit binds pheophytin, quinone, additional chlorophylls, carotenoids and lipids. D1 provides most of the ligands for the Mn4-Ca-O5 cluster of the oxygen-evolving complex (OEC). There is also a Cl(-1) ion associated with D1 and D2, which is required for oxygen evolution. The PSII complex binds additional chlorophylls, carotenoids and specific lipids.</text>
</comment>
<comment type="subunit">
    <text evidence="1">PSII is composed of 1 copy each of membrane proteins PsbA, PsbB, PsbC, PsbD, PsbE, PsbF, PsbH, PsbI, PsbJ, PsbK, PsbL, PsbM, PsbT, PsbX, PsbY, PsbZ, Psb30/Ycf12, at least 3 peripheral proteins of the oxygen-evolving complex and a large number of cofactors. It forms dimeric complexes.</text>
</comment>
<comment type="subcellular location">
    <subcellularLocation>
        <location evidence="1">Plastid</location>
        <location evidence="1">Chloroplast thylakoid membrane</location>
        <topology evidence="1">Multi-pass membrane protein</topology>
    </subcellularLocation>
</comment>
<comment type="PTM">
    <text evidence="1">Tyr-161 forms a radical intermediate that is referred to as redox-active TyrZ, YZ or Y-Z.</text>
</comment>
<comment type="PTM">
    <text evidence="1">C-terminally processed by CTPA; processing is essential to allow assembly of the oxygen-evolving complex and thus photosynthetic growth.</text>
</comment>
<comment type="miscellaneous">
    <text evidence="1">2 of the reaction center chlorophylls (ChlD1 and ChlD2) are entirely coordinated by water.</text>
</comment>
<comment type="miscellaneous">
    <text evidence="1">Herbicides such as atrazine, BNT, diuron or ioxynil bind in the Q(B) binding site and block subsequent electron transfer.</text>
</comment>
<comment type="similarity">
    <text evidence="1">Belongs to the reaction center PufL/M/PsbA/D family.</text>
</comment>
<accession>Q85WS3</accession>
<keyword id="KW-0007">Acetylation</keyword>
<keyword id="KW-0106">Calcium</keyword>
<keyword id="KW-0148">Chlorophyll</keyword>
<keyword id="KW-0150">Chloroplast</keyword>
<keyword id="KW-0157">Chromophore</keyword>
<keyword id="KW-0249">Electron transport</keyword>
<keyword id="KW-0359">Herbicide resistance</keyword>
<keyword id="KW-0408">Iron</keyword>
<keyword id="KW-0460">Magnesium</keyword>
<keyword id="KW-0464">Manganese</keyword>
<keyword id="KW-0472">Membrane</keyword>
<keyword id="KW-0479">Metal-binding</keyword>
<keyword id="KW-0560">Oxidoreductase</keyword>
<keyword id="KW-0597">Phosphoprotein</keyword>
<keyword id="KW-0602">Photosynthesis</keyword>
<keyword id="KW-0604">Photosystem II</keyword>
<keyword id="KW-0934">Plastid</keyword>
<keyword id="KW-0793">Thylakoid</keyword>
<keyword id="KW-0812">Transmembrane</keyword>
<keyword id="KW-1133">Transmembrane helix</keyword>
<keyword id="KW-0813">Transport</keyword>
<sequence>MTAIIERRESANFWSRFCDWITSTENRLYIGWFGVLMIPTLLTATSVFIIAFIAAPPVDIDGIREPVSGSLLYGNNIISGAIIPTSAAIGLHFYPIWEAASVDEWLYNGGPYELIVLHFLLGVACYMGREWELSFRLGMRPWIAVAYSAPVAAATAVFLIYPIGQGSFSDGMPLGISGTFNFMIVFQAEHNILMHPFHMLGVAGVFGGSLFSAMHGSLVTSSLIRETTENQSANAGYKFGQEEETYNIVAAHGYFGRLIFQYASFNNSRSLHFFLAAWPVAGIWFTALGISTMAFNLNGFNFNQSVVDSQGRVINTWADIINRANLGMEVMHERNAHNFPLDLAAVESISIGG</sequence>